<protein>
    <recommendedName>
        <fullName>Uncharacterized protein YgaM</fullName>
    </recommendedName>
</protein>
<feature type="chain" id="PRO_0000169297" description="Uncharacterized protein YgaM">
    <location>
        <begin position="1"/>
        <end position="109"/>
    </location>
</feature>
<feature type="transmembrane region" description="Helical" evidence="1">
    <location>
        <begin position="87"/>
        <end position="106"/>
    </location>
</feature>
<comment type="subunit">
    <text>Upon overexpression binds to ribosomes.</text>
</comment>
<comment type="subcellular location">
    <subcellularLocation>
        <location evidence="3">Cell inner membrane</location>
        <topology evidence="3">Single-pass membrane protein</topology>
    </subcellularLocation>
</comment>
<comment type="induction">
    <text evidence="2">Maximally expressed between 6 and 12 hours of growth, in early stationary phase.</text>
</comment>
<comment type="similarity">
    <text evidence="3">Belongs to the ElaB/YgaM/YqjD family.</text>
</comment>
<comment type="sequence caution" evidence="3">
    <conflict type="erroneous initiation">
        <sequence resource="EMBL-CDS" id="BAA16537"/>
    </conflict>
    <text>Extended N-terminus.</text>
</comment>
<comment type="sequence caution" evidence="3">
    <conflict type="erroneous initiation">
        <sequence resource="EMBL-CDS" id="CAA56183"/>
    </conflict>
    <text>Extended N-terminus.</text>
</comment>
<comment type="sequence caution" evidence="3">
    <conflict type="frameshift">
        <sequence resource="EMBL-CDS" id="CAA56183"/>
    </conflict>
</comment>
<proteinExistence type="evidence at protein level"/>
<evidence type="ECO:0000255" key="1"/>
<evidence type="ECO:0000269" key="2">
    <source>
    </source>
</evidence>
<evidence type="ECO:0000305" key="3"/>
<accession>P0ADQ7</accession>
<accession>P77800</accession>
<accession>Q47413</accession>
<keyword id="KW-0997">Cell inner membrane</keyword>
<keyword id="KW-1003">Cell membrane</keyword>
<keyword id="KW-0472">Membrane</keyword>
<keyword id="KW-1185">Reference proteome</keyword>
<keyword id="KW-0812">Transmembrane</keyword>
<keyword id="KW-1133">Transmembrane helix</keyword>
<gene>
    <name type="primary">ygaM</name>
    <name type="ordered locus">b2672</name>
    <name type="ordered locus">JW2647</name>
</gene>
<dbReference type="EMBL" id="X79787">
    <property type="protein sequence ID" value="CAA56183.1"/>
    <property type="status" value="ALT_SEQ"/>
    <property type="molecule type" value="Genomic_DNA"/>
</dbReference>
<dbReference type="EMBL" id="U00096">
    <property type="protein sequence ID" value="AAC75719.2"/>
    <property type="molecule type" value="Genomic_DNA"/>
</dbReference>
<dbReference type="EMBL" id="AP009048">
    <property type="protein sequence ID" value="BAA16537.1"/>
    <property type="status" value="ALT_INIT"/>
    <property type="molecule type" value="Genomic_DNA"/>
</dbReference>
<dbReference type="PIR" id="A65047">
    <property type="entry name" value="A65047"/>
</dbReference>
<dbReference type="RefSeq" id="NP_417158.4">
    <property type="nucleotide sequence ID" value="NC_000913.3"/>
</dbReference>
<dbReference type="RefSeq" id="WP_001295174.1">
    <property type="nucleotide sequence ID" value="NZ_STEB01000042.1"/>
</dbReference>
<dbReference type="SMR" id="P0ADQ7"/>
<dbReference type="BioGRID" id="4261135">
    <property type="interactions" value="20"/>
</dbReference>
<dbReference type="DIP" id="DIP-48124N"/>
<dbReference type="FunCoup" id="P0ADQ7">
    <property type="interactions" value="154"/>
</dbReference>
<dbReference type="IntAct" id="P0ADQ7">
    <property type="interactions" value="5"/>
</dbReference>
<dbReference type="STRING" id="511145.b2672"/>
<dbReference type="jPOST" id="P0ADQ7"/>
<dbReference type="PaxDb" id="511145-b2672"/>
<dbReference type="EnsemblBacteria" id="AAC75719">
    <property type="protein sequence ID" value="AAC75719"/>
    <property type="gene ID" value="b2672"/>
</dbReference>
<dbReference type="GeneID" id="947157"/>
<dbReference type="KEGG" id="ecj:JW2647"/>
<dbReference type="KEGG" id="eco:b2672"/>
<dbReference type="PATRIC" id="fig|1411691.4.peg.4069"/>
<dbReference type="EchoBASE" id="EB3070"/>
<dbReference type="eggNOG" id="COG4575">
    <property type="taxonomic scope" value="Bacteria"/>
</dbReference>
<dbReference type="HOGENOM" id="CLU_132623_4_1_6"/>
<dbReference type="InParanoid" id="P0ADQ7"/>
<dbReference type="OrthoDB" id="6522731at2"/>
<dbReference type="PhylomeDB" id="P0ADQ7"/>
<dbReference type="BioCyc" id="EcoCyc:B0899-MONOMER"/>
<dbReference type="PRO" id="PR:P0ADQ7"/>
<dbReference type="Proteomes" id="UP000000625">
    <property type="component" value="Chromosome"/>
</dbReference>
<dbReference type="GO" id="GO:0005829">
    <property type="term" value="C:cytosol"/>
    <property type="evidence" value="ECO:0000314"/>
    <property type="project" value="EcoCyc"/>
</dbReference>
<dbReference type="GO" id="GO:0005886">
    <property type="term" value="C:plasma membrane"/>
    <property type="evidence" value="ECO:0000318"/>
    <property type="project" value="GO_Central"/>
</dbReference>
<dbReference type="GO" id="GO:0043022">
    <property type="term" value="F:ribosome binding"/>
    <property type="evidence" value="ECO:0007669"/>
    <property type="project" value="InterPro"/>
</dbReference>
<dbReference type="InterPro" id="IPR043605">
    <property type="entry name" value="DUF883_C"/>
</dbReference>
<dbReference type="InterPro" id="IPR043604">
    <property type="entry name" value="DUF883_N"/>
</dbReference>
<dbReference type="InterPro" id="IPR010279">
    <property type="entry name" value="YqjD/ElaB"/>
</dbReference>
<dbReference type="NCBIfam" id="NF007523">
    <property type="entry name" value="PRK10132.1"/>
    <property type="match status" value="1"/>
</dbReference>
<dbReference type="PANTHER" id="PTHR35893:SF4">
    <property type="entry name" value="INNER MEMBRANE PROTEIN"/>
    <property type="match status" value="1"/>
</dbReference>
<dbReference type="PANTHER" id="PTHR35893">
    <property type="entry name" value="INNER MEMBRANE PROTEIN-RELATED"/>
    <property type="match status" value="1"/>
</dbReference>
<dbReference type="Pfam" id="PF05957">
    <property type="entry name" value="DUF883"/>
    <property type="match status" value="1"/>
</dbReference>
<dbReference type="Pfam" id="PF19029">
    <property type="entry name" value="DUF883_C"/>
    <property type="match status" value="1"/>
</dbReference>
<organism>
    <name type="scientific">Escherichia coli (strain K12)</name>
    <dbReference type="NCBI Taxonomy" id="83333"/>
    <lineage>
        <taxon>Bacteria</taxon>
        <taxon>Pseudomonadati</taxon>
        <taxon>Pseudomonadota</taxon>
        <taxon>Gammaproteobacteria</taxon>
        <taxon>Enterobacterales</taxon>
        <taxon>Enterobacteriaceae</taxon>
        <taxon>Escherichia</taxon>
    </lineage>
</organism>
<sequence length="109" mass="11847">MFNRPNRNDVDDGVQDIQNDVNQLADSLESVLKSWGSDAKGEAEAARSKAQALLKETRARMHGRTRVQQAARDAVGCADSFVRERPWCSVGTAAAVGIFIGALLSMRKS</sequence>
<reference key="1">
    <citation type="journal article" date="1996" name="Mol. Microbiol.">
        <title>Promoter identification and expression analysis of Salmonella typhimurium and Escherichia coli nrdEF operons encoding one of two class I ribonucleotide reductases present in both bacteria.</title>
        <authorList>
            <person name="Jordan A."/>
            <person name="Aragall E."/>
            <person name="Gibert I."/>
            <person name="Barbe J."/>
        </authorList>
    </citation>
    <scope>NUCLEOTIDE SEQUENCE [GENOMIC DNA]</scope>
    <source>
        <strain>K12</strain>
    </source>
</reference>
<reference key="2">
    <citation type="journal article" date="1997" name="DNA Res.">
        <title>Construction of a contiguous 874-kb sequence of the Escherichia coli-K12 genome corresponding to 50.0-68.8 min on the linkage map and analysis of its sequence features.</title>
        <authorList>
            <person name="Yamamoto Y."/>
            <person name="Aiba H."/>
            <person name="Baba T."/>
            <person name="Hayashi K."/>
            <person name="Inada T."/>
            <person name="Isono K."/>
            <person name="Itoh T."/>
            <person name="Kimura S."/>
            <person name="Kitagawa M."/>
            <person name="Makino K."/>
            <person name="Miki T."/>
            <person name="Mitsuhashi N."/>
            <person name="Mizobuchi K."/>
            <person name="Mori H."/>
            <person name="Nakade S."/>
            <person name="Nakamura Y."/>
            <person name="Nashimoto H."/>
            <person name="Oshima T."/>
            <person name="Oyama S."/>
            <person name="Saito N."/>
            <person name="Sampei G."/>
            <person name="Satoh Y."/>
            <person name="Sivasundaram S."/>
            <person name="Tagami H."/>
            <person name="Takahashi H."/>
            <person name="Takeda J."/>
            <person name="Takemoto K."/>
            <person name="Uehara K."/>
            <person name="Wada C."/>
            <person name="Yamagata S."/>
            <person name="Horiuchi T."/>
        </authorList>
    </citation>
    <scope>NUCLEOTIDE SEQUENCE [LARGE SCALE GENOMIC DNA]</scope>
    <source>
        <strain>K12 / W3110 / ATCC 27325 / DSM 5911</strain>
    </source>
</reference>
<reference key="3">
    <citation type="journal article" date="1997" name="Science">
        <title>The complete genome sequence of Escherichia coli K-12.</title>
        <authorList>
            <person name="Blattner F.R."/>
            <person name="Plunkett G. III"/>
            <person name="Bloch C.A."/>
            <person name="Perna N.T."/>
            <person name="Burland V."/>
            <person name="Riley M."/>
            <person name="Collado-Vides J."/>
            <person name="Glasner J.D."/>
            <person name="Rode C.K."/>
            <person name="Mayhew G.F."/>
            <person name="Gregor J."/>
            <person name="Davis N.W."/>
            <person name="Kirkpatrick H.A."/>
            <person name="Goeden M.A."/>
            <person name="Rose D.J."/>
            <person name="Mau B."/>
            <person name="Shao Y."/>
        </authorList>
    </citation>
    <scope>NUCLEOTIDE SEQUENCE [LARGE SCALE GENOMIC DNA]</scope>
    <source>
        <strain>K12 / MG1655 / ATCC 47076</strain>
    </source>
</reference>
<reference key="4">
    <citation type="journal article" date="2006" name="Mol. Syst. Biol.">
        <title>Highly accurate genome sequences of Escherichia coli K-12 strains MG1655 and W3110.</title>
        <authorList>
            <person name="Hayashi K."/>
            <person name="Morooka N."/>
            <person name="Yamamoto Y."/>
            <person name="Fujita K."/>
            <person name="Isono K."/>
            <person name="Choi S."/>
            <person name="Ohtsubo E."/>
            <person name="Baba T."/>
            <person name="Wanner B.L."/>
            <person name="Mori H."/>
            <person name="Horiuchi T."/>
        </authorList>
    </citation>
    <scope>NUCLEOTIDE SEQUENCE [LARGE SCALE GENOMIC DNA]</scope>
    <source>
        <strain>K12 / W3110 / ATCC 27325 / DSM 5911</strain>
    </source>
</reference>
<reference key="5">
    <citation type="journal article" date="2012" name="J. Bacteriol.">
        <title>YqjD is an inner membrane protein associated with stationary-phase ribosomes in Escherichia coli.</title>
        <authorList>
            <person name="Yoshida H."/>
            <person name="Maki Y."/>
            <person name="Furuike S."/>
            <person name="Sakai A."/>
            <person name="Ueta M."/>
            <person name="Wada A."/>
        </authorList>
    </citation>
    <scope>RIBOSOME-BINDING</scope>
    <scope>INDUCTION</scope>
    <source>
        <strain>K12 / W3110 / ATCC 27325 / DSM 5911</strain>
    </source>
</reference>
<name>YGAM_ECOLI</name>